<evidence type="ECO:0000250" key="1">
    <source>
        <dbReference type="UniProtKB" id="F2VYU4"/>
    </source>
</evidence>
<evidence type="ECO:0000255" key="2"/>
<evidence type="ECO:0000255" key="3">
    <source>
        <dbReference type="PROSITE-ProRule" id="PRU00280"/>
    </source>
</evidence>
<evidence type="ECO:0000269" key="4">
    <source>
    </source>
</evidence>
<evidence type="ECO:0000269" key="5">
    <source>
    </source>
</evidence>
<evidence type="ECO:0000305" key="6"/>
<evidence type="ECO:0000312" key="7">
    <source>
        <dbReference type="EMBL" id="ADE80944.1"/>
    </source>
</evidence>
<evidence type="ECO:0000312" key="8">
    <source>
        <dbReference type="EMBL" id="ADE80945.1"/>
    </source>
</evidence>
<evidence type="ECO:0000312" key="9">
    <source>
        <dbReference type="EMBL" id="ADE80946.1"/>
    </source>
</evidence>
<evidence type="ECO:0000312" key="10">
    <source>
        <dbReference type="EMBL" id="ADE80948.1"/>
    </source>
</evidence>
<evidence type="ECO:0000312" key="11">
    <source>
        <dbReference type="EMBL" id="ADE80951.1"/>
    </source>
</evidence>
<evidence type="ECO:0000312" key="12">
    <source>
        <dbReference type="EMBL" id="BAG71909.1"/>
    </source>
</evidence>
<evidence type="ECO:0000312" key="13">
    <source>
        <dbReference type="EMBL" id="BAG72135.1"/>
    </source>
</evidence>
<evidence type="ECO:0007829" key="14">
    <source>
        <dbReference type="PDB" id="6FU9"/>
    </source>
</evidence>
<organism>
    <name type="scientific">Oryza sativa subsp. japonica</name>
    <name type="common">Rice</name>
    <dbReference type="NCBI Taxonomy" id="39947"/>
    <lineage>
        <taxon>Eukaryota</taxon>
        <taxon>Viridiplantae</taxon>
        <taxon>Streptophyta</taxon>
        <taxon>Embryophyta</taxon>
        <taxon>Tracheophyta</taxon>
        <taxon>Spermatophyta</taxon>
        <taxon>Magnoliopsida</taxon>
        <taxon>Liliopsida</taxon>
        <taxon>Poales</taxon>
        <taxon>Poaceae</taxon>
        <taxon>BOP clade</taxon>
        <taxon>Oryzoideae</taxon>
        <taxon>Oryzeae</taxon>
        <taxon>Oryzinae</taxon>
        <taxon>Oryza</taxon>
        <taxon>Oryza sativa</taxon>
    </lineage>
</organism>
<protein>
    <recommendedName>
        <fullName evidence="6">Disease resistance protein Pikm1-TS</fullName>
    </recommendedName>
</protein>
<feature type="chain" id="PRO_0000444667" description="Disease resistance protein Pikm1-TS">
    <location>
        <begin position="1"/>
        <end position="1143"/>
    </location>
</feature>
<feature type="domain" description="HMA" evidence="3">
    <location>
        <begin position="189"/>
        <end position="258"/>
    </location>
</feature>
<feature type="domain" description="NB-ARC" evidence="2">
    <location>
        <begin position="282"/>
        <end position="570"/>
    </location>
</feature>
<feature type="repeat" description="LRR 1" evidence="2">
    <location>
        <begin position="681"/>
        <end position="706"/>
    </location>
</feature>
<feature type="repeat" description="LRR 2" evidence="2">
    <location>
        <begin position="708"/>
        <end position="731"/>
    </location>
</feature>
<feature type="repeat" description="LRR 3" evidence="2">
    <location>
        <begin position="732"/>
        <end position="754"/>
    </location>
</feature>
<feature type="repeat" description="LRR 4" evidence="2">
    <location>
        <begin position="756"/>
        <end position="777"/>
    </location>
</feature>
<feature type="repeat" description="LRR 5" evidence="2">
    <location>
        <begin position="778"/>
        <end position="800"/>
    </location>
</feature>
<feature type="repeat" description="LRR 6" evidence="2">
    <location>
        <begin position="802"/>
        <end position="823"/>
    </location>
</feature>
<feature type="repeat" description="LRR 7" evidence="2">
    <location>
        <begin position="824"/>
        <end position="848"/>
    </location>
</feature>
<feature type="repeat" description="LRR 8" evidence="2">
    <location>
        <begin position="945"/>
        <end position="968"/>
    </location>
</feature>
<feature type="repeat" description="LRR 9" evidence="2">
    <location>
        <begin position="979"/>
        <end position="1002"/>
    </location>
</feature>
<feature type="repeat" description="LRR 10" evidence="2">
    <location>
        <begin position="1004"/>
        <end position="1027"/>
    </location>
</feature>
<feature type="region of interest" description="Structured coiled coil (CC) domain" evidence="1">
    <location>
        <begin position="1"/>
        <end position="190"/>
    </location>
</feature>
<feature type="region of interest" description="HMA-like domain" evidence="1">
    <location>
        <begin position="191"/>
        <end position="264"/>
    </location>
</feature>
<feature type="sequence conflict" description="In Ref. 2; ADE80948/ADE80951." evidence="6" ref="2">
    <original>Q</original>
    <variation>E</variation>
    <location>
        <position position="229"/>
    </location>
</feature>
<feature type="sequence conflict" description="In Ref. 2; ADE80951." evidence="6" ref="2">
    <original>PAMFLE</original>
    <variation>HAELLQ</variation>
    <location>
        <begin position="252"/>
        <end position="257"/>
    </location>
</feature>
<feature type="sequence conflict" description="In Ref. 2; ADE80948." evidence="6" ref="2">
    <original>V</original>
    <variation>A</variation>
    <location>
        <position position="261"/>
    </location>
</feature>
<feature type="sequence conflict" description="In Ref. 2; ADE80951." evidence="6" ref="2">
    <original>W</original>
    <variation>L</variation>
    <location>
        <position position="442"/>
    </location>
</feature>
<feature type="sequence conflict" description="In Ref. 2; ADE80951." evidence="6" ref="2">
    <original>S</original>
    <variation>P</variation>
    <location>
        <position position="465"/>
    </location>
</feature>
<feature type="sequence conflict" description="In Ref. 2; ADE80951." evidence="6" ref="2">
    <original>G</original>
    <variation>R</variation>
    <location>
        <position position="495"/>
    </location>
</feature>
<feature type="sequence conflict" description="In Ref. 2; ADE80951." evidence="6" ref="2">
    <original>V</original>
    <variation>L</variation>
    <location>
        <position position="982"/>
    </location>
</feature>
<feature type="strand" evidence="14">
    <location>
        <begin position="190"/>
        <end position="195"/>
    </location>
</feature>
<feature type="helix" evidence="14">
    <location>
        <begin position="201"/>
        <end position="212"/>
    </location>
</feature>
<feature type="strand" evidence="14">
    <location>
        <begin position="217"/>
        <end position="224"/>
    </location>
</feature>
<feature type="strand" evidence="14">
    <location>
        <begin position="229"/>
        <end position="236"/>
    </location>
</feature>
<feature type="helix" evidence="14">
    <location>
        <begin position="239"/>
        <end position="249"/>
    </location>
</feature>
<feature type="strand" evidence="14">
    <location>
        <begin position="254"/>
        <end position="260"/>
    </location>
</feature>
<comment type="function">
    <text evidence="4 5">Disease resistance (R) protein that specifically recognizes the AVR-Pik effector avirulence protein from M.oryzae. Resistance proteins guard the plant against pathogens that contain an appropriate avirulence protein via an indirect interaction with this avirulence protein. That triggers a defense system including the hypersensitive response, which restricts the pathogen growth (PubMed:18940787, PubMed:22805093). Contribution of Pikm-2 is required to recognize the effector avirulence protein AVR-Pik (PubMed:18940787).</text>
</comment>
<comment type="subunit">
    <text evidence="1 5">Interacts with AVR-Pik through its N-terminal part containing the HMA-like domain.</text>
</comment>
<comment type="tissue specificity">
    <text evidence="4">Constitutively expressed.</text>
</comment>
<comment type="induction">
    <text evidence="4">By M.oryzae pathogen infection.</text>
</comment>
<comment type="domain">
    <text evidence="1">The HMA-like (RATX1) domain is responsible for the specific recognition of AVR effectors.</text>
</comment>
<comment type="similarity">
    <text evidence="6">Belongs to the disease resistance NB-LRR family.</text>
</comment>
<name>PIKM1_ORYSJ</name>
<dbReference type="EMBL" id="AB462256">
    <property type="protein sequence ID" value="BAG71909.1"/>
    <property type="molecule type" value="Genomic_DNA"/>
</dbReference>
<dbReference type="EMBL" id="AB462324">
    <property type="protein sequence ID" value="BAG72135.1"/>
    <property type="molecule type" value="mRNA"/>
</dbReference>
<dbReference type="EMBL" id="GU811849">
    <property type="protein sequence ID" value="ADE80944.1"/>
    <property type="molecule type" value="Genomic_DNA"/>
</dbReference>
<dbReference type="EMBL" id="GU811850">
    <property type="protein sequence ID" value="ADE80945.1"/>
    <property type="molecule type" value="Genomic_DNA"/>
</dbReference>
<dbReference type="EMBL" id="GU811851">
    <property type="protein sequence ID" value="ADE80946.1"/>
    <property type="molecule type" value="Genomic_DNA"/>
</dbReference>
<dbReference type="EMBL" id="GU811853">
    <property type="protein sequence ID" value="ADE80948.1"/>
    <property type="molecule type" value="Genomic_DNA"/>
</dbReference>
<dbReference type="EMBL" id="GU811856">
    <property type="protein sequence ID" value="ADE80951.1"/>
    <property type="molecule type" value="Genomic_DNA"/>
</dbReference>
<dbReference type="PDB" id="6FU9">
    <property type="method" value="X-ray"/>
    <property type="resolution" value="1.20 A"/>
    <property type="chains" value="A/C=186-264"/>
</dbReference>
<dbReference type="PDB" id="6FUB">
    <property type="method" value="X-ray"/>
    <property type="resolution" value="1.30 A"/>
    <property type="chains" value="A=186-264"/>
</dbReference>
<dbReference type="PDB" id="6FUD">
    <property type="method" value="X-ray"/>
    <property type="resolution" value="1.30 A"/>
    <property type="chains" value="A=186-264"/>
</dbReference>
<dbReference type="PDBsum" id="6FU9"/>
<dbReference type="PDBsum" id="6FUB"/>
<dbReference type="PDBsum" id="6FUD"/>
<dbReference type="SMR" id="B5UBC1"/>
<dbReference type="GO" id="GO:0043531">
    <property type="term" value="F:ADP binding"/>
    <property type="evidence" value="ECO:0007669"/>
    <property type="project" value="InterPro"/>
</dbReference>
<dbReference type="GO" id="GO:0005524">
    <property type="term" value="F:ATP binding"/>
    <property type="evidence" value="ECO:0007669"/>
    <property type="project" value="UniProtKB-KW"/>
</dbReference>
<dbReference type="GO" id="GO:0046872">
    <property type="term" value="F:metal ion binding"/>
    <property type="evidence" value="ECO:0007669"/>
    <property type="project" value="InterPro"/>
</dbReference>
<dbReference type="GO" id="GO:0006952">
    <property type="term" value="P:defense response"/>
    <property type="evidence" value="ECO:0007669"/>
    <property type="project" value="UniProtKB-KW"/>
</dbReference>
<dbReference type="GO" id="GO:0051707">
    <property type="term" value="P:response to other organism"/>
    <property type="evidence" value="ECO:0007669"/>
    <property type="project" value="UniProtKB-ARBA"/>
</dbReference>
<dbReference type="FunFam" id="3.40.50.300:FF:003687">
    <property type="entry name" value="Disease resistance protein Pik-1"/>
    <property type="match status" value="1"/>
</dbReference>
<dbReference type="Gene3D" id="1.20.5.4130">
    <property type="match status" value="1"/>
</dbReference>
<dbReference type="Gene3D" id="3.30.70.100">
    <property type="match status" value="1"/>
</dbReference>
<dbReference type="Gene3D" id="3.40.50.300">
    <property type="entry name" value="P-loop containing nucleotide triphosphate hydrolases"/>
    <property type="match status" value="1"/>
</dbReference>
<dbReference type="Gene3D" id="3.80.10.10">
    <property type="entry name" value="Ribonuclease Inhibitor"/>
    <property type="match status" value="1"/>
</dbReference>
<dbReference type="Gene3D" id="1.10.10.10">
    <property type="entry name" value="Winged helix-like DNA-binding domain superfamily/Winged helix DNA-binding domain"/>
    <property type="match status" value="1"/>
</dbReference>
<dbReference type="InterPro" id="IPR044974">
    <property type="entry name" value="Disease_R_plants"/>
</dbReference>
<dbReference type="InterPro" id="IPR006121">
    <property type="entry name" value="HMA_dom"/>
</dbReference>
<dbReference type="InterPro" id="IPR003591">
    <property type="entry name" value="Leu-rich_rpt_typical-subtyp"/>
</dbReference>
<dbReference type="InterPro" id="IPR032675">
    <property type="entry name" value="LRR_dom_sf"/>
</dbReference>
<dbReference type="InterPro" id="IPR055414">
    <property type="entry name" value="LRR_R13L4/SHOC2-like"/>
</dbReference>
<dbReference type="InterPro" id="IPR002182">
    <property type="entry name" value="NB-ARC"/>
</dbReference>
<dbReference type="InterPro" id="IPR027417">
    <property type="entry name" value="P-loop_NTPase"/>
</dbReference>
<dbReference type="InterPro" id="IPR041118">
    <property type="entry name" value="Rx_N"/>
</dbReference>
<dbReference type="InterPro" id="IPR036388">
    <property type="entry name" value="WH-like_DNA-bd_sf"/>
</dbReference>
<dbReference type="PANTHER" id="PTHR23155">
    <property type="entry name" value="DISEASE RESISTANCE PROTEIN RP"/>
    <property type="match status" value="1"/>
</dbReference>
<dbReference type="PANTHER" id="PTHR23155:SF1167">
    <property type="entry name" value="OS08G0412100 PROTEIN"/>
    <property type="match status" value="1"/>
</dbReference>
<dbReference type="Pfam" id="PF23598">
    <property type="entry name" value="LRR_14"/>
    <property type="match status" value="3"/>
</dbReference>
<dbReference type="Pfam" id="PF00931">
    <property type="entry name" value="NB-ARC"/>
    <property type="match status" value="1"/>
</dbReference>
<dbReference type="Pfam" id="PF18052">
    <property type="entry name" value="Rx_N"/>
    <property type="match status" value="1"/>
</dbReference>
<dbReference type="Pfam" id="PF23559">
    <property type="entry name" value="WH_DRP"/>
    <property type="match status" value="1"/>
</dbReference>
<dbReference type="PRINTS" id="PR00364">
    <property type="entry name" value="DISEASERSIST"/>
</dbReference>
<dbReference type="SMART" id="SM00369">
    <property type="entry name" value="LRR_TYP"/>
    <property type="match status" value="3"/>
</dbReference>
<dbReference type="SUPFAM" id="SSF52540">
    <property type="entry name" value="P-loop containing nucleoside triphosphate hydrolases"/>
    <property type="match status" value="1"/>
</dbReference>
<dbReference type="SUPFAM" id="SSF52047">
    <property type="entry name" value="RNI-like"/>
    <property type="match status" value="1"/>
</dbReference>
<dbReference type="PROSITE" id="PS50846">
    <property type="entry name" value="HMA_2"/>
    <property type="match status" value="1"/>
</dbReference>
<gene>
    <name evidence="12" type="primary">PIKM1-TS</name>
    <name evidence="7 8 9 10 11" type="synonym">PI-KM1</name>
</gene>
<sequence>MEAAAMAVTAATGALAPVLVKLAALLDDGECNLLEGSRSDAEFIRSELEAVHSLLTPNILGRMGDDDAACKDGLIAEVRELSYDLDDAVDDFLELNFEQRRSASPFGELKARVEERVSNRFSDWKLPAASLPPSSVHRRAGLPPPDAGLVGMHKRKEELIELLEQGSSDASRWRKRKPHVPLRIMGGEMQKIVFKIPMVDDKSRTKAMSLVASTVGVHSVAIAGDLRDQVVVVGDGIDSINLVSALRKKVGPAMFLEVSQVKEDVKEITAMLAPVKSICEFHEVKTICILGLPGGGKTTIARVLYHALGTQFQCRVFASISPSSSPSPNLTETLADIFAQAQLGVTDTLSTPYGGSGTGRALQQHLIDNISAFLLNKKYLIVIDDIWHWEEWEVIRKSIPKNDLGGRIIMTTRLNSIAEKCHTDDNDVFVYEVGDLDNNDAWSLSWGIATKSGAGNRIGTGEDNSCYDIVNMCYGMPLALIWLSSALVGEIEELGGAEVKKCRDLRHIEDGILDIPSLQPLAESLCLGYNHLPLYLRTLLLYCSAYHWSNRIERGRLVRRWIAEGFVSEEKEAEGYFGELINRGWITQHGDNNSYNYYEIHPVMLAFLRCKSKEYNFLTCLGLGSDTSTSASSPRLIRRLSLQGGYPVDCLSSMSMDVSHTCSLVVLGDVARPKGIPFYMFKRLRVLDLEDNKDIQDSHLQGICEQLSLRVRYLGLKGTRIRKLPQEMRKLKHLEILYVGSTRISELPQEIGELKHLRILDVRNTDITELPLQIRELQHLHTLDVRNTPISELPPQVGKLQNLKIMCVRSTGVRELPKEIGELNHLQTLDVRNTRVRELPWQAGQISQSLRVLAGDSGDGVRLPEGVCEALINGIPGATRAKCREVLSIAIIDRFGPPLVGIFKVPGSHMRIPKMIKDHFRVLSCLDIRLCHKLEDDDQKFLAEMPNLQTLVLRFEALPRQPITINGTGFQMLESFRVDSRVPRIAFHEDAMPNLKLLEFKFYAGPASNDAIGITNLKSLQKVVFRCSPWYKSDAPGISATIDVVKKEAEEHPNRPITLLINAGYKEISTESHGSSENIAGSSGIDTEPAQAQHDNLPAVRDDYKGKGILLDGRCPTCGRATKIEEETQDRVADIEIQTETTS</sequence>
<proteinExistence type="evidence at protein level"/>
<reference evidence="12 13" key="1">
    <citation type="journal article" date="2008" name="Genetics">
        <title>Two adjacent nucleotide-binding site-leucine-rich repeat class genes are required to confer Pikm-specific rice blast resistance.</title>
        <authorList>
            <person name="Ashikawa I."/>
            <person name="Hayashi N."/>
            <person name="Yamane H."/>
            <person name="Kanamori H."/>
            <person name="Wu J."/>
            <person name="Matsumoto T."/>
            <person name="Ono K."/>
            <person name="Yano M."/>
        </authorList>
    </citation>
    <scope>NUCLEOTIDE SEQUENCE [GENOMIC DNA / MRNA]</scope>
    <scope>FUNCTION</scope>
    <scope>TISSUE SPECIFICITY</scope>
    <scope>INDUCTION BY PATHOGEN INFECTION</scope>
    <source>
        <strain>cv. Tsuyuake</strain>
    </source>
</reference>
<reference evidence="7 8 9 10 11" key="2">
    <citation type="journal article" date="2010" name="Plant Sci.">
        <title>Sequence variation at the rice blast resistance gene Pi-km locus: Implications for the development of allele specific markers.</title>
        <authorList>
            <person name="Costanzo S."/>
            <person name="Jia Y."/>
        </authorList>
    </citation>
    <scope>NUCLEOTIDE SEQUENCE [GENOMIC DNA]</scope>
    <source>
        <strain>cv. Cypress</strain>
        <strain>cv. Kanto 51</strain>
        <strain>cv. Katy</strain>
        <strain>cv. Lemont</strain>
    </source>
</reference>
<reference key="3">
    <citation type="journal article" date="2012" name="Plant J.">
        <title>Arms race co-evolution of Magnaporthe oryzae AVR-Pik and rice Pik genes driven by their physical interactions.</title>
        <authorList>
            <person name="Kanzaki H."/>
            <person name="Yoshida K."/>
            <person name="Saitoh H."/>
            <person name="Fujisaki K."/>
            <person name="Hirabuchi A."/>
            <person name="Alaux L."/>
            <person name="Fournier E."/>
            <person name="Tharreau D."/>
            <person name="Terauchi R."/>
        </authorList>
    </citation>
    <scope>INTERACTION WITH AVR-PIK</scope>
    <scope>FUNCTION</scope>
    <source>
        <strain>cv. Tsuyuake</strain>
    </source>
</reference>
<keyword id="KW-0002">3D-structure</keyword>
<keyword id="KW-0067">ATP-binding</keyword>
<keyword id="KW-0175">Coiled coil</keyword>
<keyword id="KW-0433">Leucine-rich repeat</keyword>
<keyword id="KW-0547">Nucleotide-binding</keyword>
<keyword id="KW-0611">Plant defense</keyword>
<keyword id="KW-0677">Repeat</keyword>
<accession>B5UBC1</accession>
<accession>D5L9G0</accession>
<accession>D5L9G3</accession>